<feature type="chain" id="PRO_0000062728" description="Cell division protein FtsA">
    <location>
        <begin position="1"/>
        <end position="443"/>
    </location>
</feature>
<gene>
    <name evidence="1" type="primary">ftsA</name>
</gene>
<sequence>MSFFGSSHFGLPRLKPLSSKRSHIVSVLDIGSTKVVCMIGRLTPRQESEILPGRTHKVEIIGIGHQRSRGVKSGVIADLDALEGVIRLSVDAAERMAGLTVDSLIVNVSAGRLASDIYTASIDLGGQEVEASDLRKVLVAASQQSMRQDRAILHSLPTGYSLDGERGIRDPLSMYGDLLGVDMHVVTVERTALKNLELCVNRAHLSVEGMVATPYASGLAALVDDEVELGCAAIDMGGGTTTISVFAEGRLIHTDAIGLGGHHVTTDLARGLSTRIEDAERLKVVHGSALLNGADERDMISIPPIGEDDRDQPSQVSRALVTRIVRARIEETLELIRDRIQKSGFSPIVGKRVVLTGGASQLTGLPETARRILARNVRIGRPMGVAGLPVAAKGPAFSTACGLMIYPQVADIEIHAAQGGMFSPFGNGSGRIARVGQWLKESF</sequence>
<reference key="1">
    <citation type="journal article" date="1997" name="J. Bacteriol.">
        <title>Interactions between heterologous FtsA and FtsZ proteins at the FtsZ ring.</title>
        <authorList>
            <person name="Ma X."/>
            <person name="Sun Q."/>
            <person name="Wang R."/>
            <person name="Singh G."/>
            <person name="Jonietz E.L."/>
            <person name="Margolin W."/>
        </authorList>
    </citation>
    <scope>NUCLEOTIDE SEQUENCE [GENOMIC DNA]</scope>
    <source>
        <strain>A136</strain>
    </source>
</reference>
<accession>P0A332</accession>
<accession>O30991</accession>
<comment type="function">
    <text evidence="1">Cell division protein that is involved in the assembly of the Z ring. May serve as a membrane anchor for the Z ring.</text>
</comment>
<comment type="subunit">
    <text evidence="1">Self-interacts. Interacts with FtsZ.</text>
</comment>
<comment type="subcellular location">
    <subcellularLocation>
        <location evidence="1">Cell inner membrane</location>
        <topology evidence="1">Peripheral membrane protein</topology>
        <orientation evidence="1">Cytoplasmic side</orientation>
    </subcellularLocation>
    <text evidence="1">Localizes to the Z ring in an FtsZ-dependent manner. Targeted to the membrane through a conserved C-terminal amphipathic helix.</text>
</comment>
<comment type="similarity">
    <text evidence="1">Belongs to the FtsA/MreB family.</text>
</comment>
<proteinExistence type="inferred from homology"/>
<evidence type="ECO:0000255" key="1">
    <source>
        <dbReference type="HAMAP-Rule" id="MF_02033"/>
    </source>
</evidence>
<dbReference type="EMBL" id="AF024659">
    <property type="protein sequence ID" value="AAC45820.1"/>
    <property type="molecule type" value="Genomic_DNA"/>
</dbReference>
<dbReference type="RefSeq" id="WP_004442783.1">
    <property type="nucleotide sequence ID" value="NZ_VTZQ01000001.1"/>
</dbReference>
<dbReference type="SMR" id="P0A332"/>
<dbReference type="GeneID" id="97364829"/>
<dbReference type="eggNOG" id="COG0849">
    <property type="taxonomic scope" value="Bacteria"/>
</dbReference>
<dbReference type="OrthoDB" id="9810567at2"/>
<dbReference type="GO" id="GO:0032153">
    <property type="term" value="C:cell division site"/>
    <property type="evidence" value="ECO:0007669"/>
    <property type="project" value="UniProtKB-UniRule"/>
</dbReference>
<dbReference type="GO" id="GO:0009898">
    <property type="term" value="C:cytoplasmic side of plasma membrane"/>
    <property type="evidence" value="ECO:0007669"/>
    <property type="project" value="UniProtKB-UniRule"/>
</dbReference>
<dbReference type="GO" id="GO:0043093">
    <property type="term" value="P:FtsZ-dependent cytokinesis"/>
    <property type="evidence" value="ECO:0007669"/>
    <property type="project" value="UniProtKB-UniRule"/>
</dbReference>
<dbReference type="CDD" id="cd24048">
    <property type="entry name" value="ASKHA_NBD_FtsA"/>
    <property type="match status" value="1"/>
</dbReference>
<dbReference type="Gene3D" id="3.30.1490.110">
    <property type="match status" value="1"/>
</dbReference>
<dbReference type="Gene3D" id="3.30.420.40">
    <property type="match status" value="1"/>
</dbReference>
<dbReference type="HAMAP" id="MF_02033">
    <property type="entry name" value="FtsA"/>
    <property type="match status" value="1"/>
</dbReference>
<dbReference type="InterPro" id="IPR043129">
    <property type="entry name" value="ATPase_NBD"/>
</dbReference>
<dbReference type="InterPro" id="IPR020823">
    <property type="entry name" value="Cell_div_FtsA"/>
</dbReference>
<dbReference type="InterPro" id="IPR050696">
    <property type="entry name" value="FtsA/MreB"/>
</dbReference>
<dbReference type="InterPro" id="IPR003494">
    <property type="entry name" value="SHS2_FtsA"/>
</dbReference>
<dbReference type="NCBIfam" id="TIGR01174">
    <property type="entry name" value="ftsA"/>
    <property type="match status" value="1"/>
</dbReference>
<dbReference type="PANTHER" id="PTHR32432:SF4">
    <property type="entry name" value="CELL DIVISION PROTEIN FTSA"/>
    <property type="match status" value="1"/>
</dbReference>
<dbReference type="PANTHER" id="PTHR32432">
    <property type="entry name" value="CELL DIVISION PROTEIN FTSA-RELATED"/>
    <property type="match status" value="1"/>
</dbReference>
<dbReference type="Pfam" id="PF14450">
    <property type="entry name" value="FtsA"/>
    <property type="match status" value="2"/>
</dbReference>
<dbReference type="Pfam" id="PF02491">
    <property type="entry name" value="SHS2_FTSA"/>
    <property type="match status" value="1"/>
</dbReference>
<dbReference type="PIRSF" id="PIRSF003101">
    <property type="entry name" value="FtsA"/>
    <property type="match status" value="1"/>
</dbReference>
<dbReference type="SMART" id="SM00842">
    <property type="entry name" value="FtsA"/>
    <property type="match status" value="1"/>
</dbReference>
<dbReference type="SUPFAM" id="SSF53067">
    <property type="entry name" value="Actin-like ATPase domain"/>
    <property type="match status" value="2"/>
</dbReference>
<organism>
    <name type="scientific">Rhizobium radiobacter</name>
    <name type="common">Agrobacterium tumefaciens</name>
    <name type="synonym">Agrobacterium radiobacter</name>
    <dbReference type="NCBI Taxonomy" id="358"/>
    <lineage>
        <taxon>Bacteria</taxon>
        <taxon>Pseudomonadati</taxon>
        <taxon>Pseudomonadota</taxon>
        <taxon>Alphaproteobacteria</taxon>
        <taxon>Hyphomicrobiales</taxon>
        <taxon>Rhizobiaceae</taxon>
        <taxon>Rhizobium/Agrobacterium group</taxon>
        <taxon>Agrobacterium</taxon>
        <taxon>Agrobacterium tumefaciens complex</taxon>
    </lineage>
</organism>
<name>FTSA_RHIRD</name>
<keyword id="KW-0131">Cell cycle</keyword>
<keyword id="KW-0132">Cell division</keyword>
<keyword id="KW-0997">Cell inner membrane</keyword>
<keyword id="KW-1003">Cell membrane</keyword>
<keyword id="KW-0472">Membrane</keyword>
<protein>
    <recommendedName>
        <fullName evidence="1">Cell division protein FtsA</fullName>
    </recommendedName>
</protein>